<gene>
    <name evidence="6" type="ordered locus">TTHA1437</name>
</gene>
<organism evidence="6">
    <name type="scientific">Thermus thermophilus (strain ATCC 27634 / DSM 579 / HB8)</name>
    <dbReference type="NCBI Taxonomy" id="300852"/>
    <lineage>
        <taxon>Bacteria</taxon>
        <taxon>Thermotogati</taxon>
        <taxon>Deinococcota</taxon>
        <taxon>Deinococci</taxon>
        <taxon>Thermales</taxon>
        <taxon>Thermaceae</taxon>
        <taxon>Thermus</taxon>
    </lineage>
</organism>
<accession>Q5SID7</accession>
<name>CRP_THET8</name>
<proteinExistence type="evidence at protein level"/>
<sequence length="216" mass="23819">MKGSPLFHGLAPEEVDLALSYFQRRLYPQGKPIFYQGDLGQALYLVASGKVRLFRTHLGGQERTLALLGPGELFGEMSLLDEGERSASAVAVEDTELLALFREDYLALIRRLPLVAHNLAALLARRLREADLELDLLSFEEARNRVAYALLKLLRQGLGPLFQIRHHELAALAGTSRETVSRVLHALAEEGVVRLGPGTVEVREAALLEEIAFGLA</sequence>
<comment type="function">
    <text evidence="3">Activates transcription. Positively regulates six promoters upstream of the TTHB186, TTHB147, TTHB178, TTHB159, TTHA0771 and TTHA0176 genes in a cAMP-dependent manner. Regulated genes include clustered regularly interspaced short palindromic repeat (CRISPR) associated (Cas) genes, and the genes encoding a putative transcriptional regulator, a protein containing the exonuclease III-like domain of DNA polymerase, a GCN5-related acetyltransferase homolog, and some T.thermophilus-specific proteins of unknown function. The consensus DNA-binding site of this transcriptional regulator is 5'-(CT)NNG(G/T)(G/T)C(A/C)N(A/T)NNTCACAN(G/C)(G/C)-3' in which N is G, A, T or C.</text>
</comment>
<comment type="subunit">
    <text evidence="3">Homodimer.</text>
</comment>
<comment type="disruption phenotype">
    <text evidence="3">Decreased expression of genes downstream of the TTHB186, TTHB147 and TTHB159 genes. Decreased expression of TTHB178, TTHA0771 and TTHA0176 genes.</text>
</comment>
<reference evidence="6 8" key="1">
    <citation type="submission" date="2004-11" db="EMBL/GenBank/DDBJ databases">
        <title>Complete genome sequence of Thermus thermophilus HB8.</title>
        <authorList>
            <person name="Masui R."/>
            <person name="Kurokawa K."/>
            <person name="Nakagawa N."/>
            <person name="Tokunaga F."/>
            <person name="Koyama Y."/>
            <person name="Shibata T."/>
            <person name="Oshima T."/>
            <person name="Yokoyama S."/>
            <person name="Yasunaga T."/>
            <person name="Kuramitsu S."/>
        </authorList>
    </citation>
    <scope>NUCLEOTIDE SEQUENCE [LARGE SCALE GENOMIC DNA]</scope>
    <source>
        <strain evidence="8">ATCC 27634 / DSM 579 / HB8</strain>
    </source>
</reference>
<reference key="2">
    <citation type="journal article" date="2007" name="J. Bacteriol.">
        <title>Transcription activation mediated by a cyclic AMP receptor protein from Thermus thermophilus HB8.</title>
        <authorList>
            <person name="Shinkai A."/>
            <person name="Kira S."/>
            <person name="Nakagawa N."/>
            <person name="Kashihara A."/>
            <person name="Kuramitsu S."/>
            <person name="Yokoyama S."/>
        </authorList>
    </citation>
    <scope>PROTEIN SEQUENCE OF 1-5 AND 77-81</scope>
    <scope>FUNCTION</scope>
    <scope>CAMP-BINDING</scope>
    <scope>SUBUNIT</scope>
    <scope>DISRUPTION PHENOTYPE</scope>
    <source>
        <strain evidence="8">ATCC 27634 / DSM 579 / HB8</strain>
    </source>
</reference>
<reference evidence="9" key="3">
    <citation type="submission" date="2012-04" db="PDB data bank">
        <title>Crystal Structure of T. thermophilius catabolite activator protein.</title>
        <authorList>
            <person name="Hudson B.P."/>
            <person name="Turo K."/>
            <person name="Birktoft J.J."/>
            <person name="Ebright R.H."/>
            <person name="Lawson C.L."/>
        </authorList>
    </citation>
    <scope>X-RAY CRYSTALLOGRAPHY (2.40 ANGSTROMS) IN COMPLEX WITH CAMP</scope>
    <source>
        <strain evidence="7">ATCC 27634 / DSM 579 / HB8</strain>
    </source>
</reference>
<protein>
    <recommendedName>
        <fullName evidence="5">Cyclic AMP receptor protein</fullName>
    </recommendedName>
    <alternativeName>
        <fullName evidence="5">Cyclic AMP receptor protein/Fumarate and nitrate reduction regulator superfamily protein TTHA1437</fullName>
        <shortName evidence="5">CRP/FNR superfamily protein TTHA1437</shortName>
    </alternativeName>
    <alternativeName>
        <fullName evidence="5">cAMP receptor protein</fullName>
        <shortName evidence="5">CRP</shortName>
    </alternativeName>
</protein>
<dbReference type="EMBL" id="AP008226">
    <property type="protein sequence ID" value="BAD71260.1"/>
    <property type="molecule type" value="Genomic_DNA"/>
</dbReference>
<dbReference type="RefSeq" id="WP_011228681.1">
    <property type="nucleotide sequence ID" value="NC_006461.1"/>
</dbReference>
<dbReference type="RefSeq" id="YP_144703.1">
    <property type="nucleotide sequence ID" value="NC_006461.1"/>
</dbReference>
<dbReference type="PDB" id="4EV0">
    <property type="method" value="X-ray"/>
    <property type="resolution" value="2.40 A"/>
    <property type="chains" value="A/D=1-216"/>
</dbReference>
<dbReference type="PDBsum" id="4EV0"/>
<dbReference type="SMR" id="Q5SID7"/>
<dbReference type="EnsemblBacteria" id="BAD71260">
    <property type="protein sequence ID" value="BAD71260"/>
    <property type="gene ID" value="BAD71260"/>
</dbReference>
<dbReference type="GeneID" id="3169761"/>
<dbReference type="KEGG" id="ttj:TTHA1437"/>
<dbReference type="PATRIC" id="fig|300852.9.peg.1411"/>
<dbReference type="eggNOG" id="COG0664">
    <property type="taxonomic scope" value="Bacteria"/>
</dbReference>
<dbReference type="HOGENOM" id="CLU_075053_3_4_0"/>
<dbReference type="PhylomeDB" id="Q5SID7"/>
<dbReference type="EvolutionaryTrace" id="Q5SID7"/>
<dbReference type="Proteomes" id="UP000000532">
    <property type="component" value="Chromosome"/>
</dbReference>
<dbReference type="GO" id="GO:0005829">
    <property type="term" value="C:cytosol"/>
    <property type="evidence" value="ECO:0007669"/>
    <property type="project" value="TreeGrafter"/>
</dbReference>
<dbReference type="GO" id="GO:0030552">
    <property type="term" value="F:cAMP binding"/>
    <property type="evidence" value="ECO:0000314"/>
    <property type="project" value="UniProtKB"/>
</dbReference>
<dbReference type="GO" id="GO:0003677">
    <property type="term" value="F:DNA binding"/>
    <property type="evidence" value="ECO:0000314"/>
    <property type="project" value="UniProtKB"/>
</dbReference>
<dbReference type="GO" id="GO:0003700">
    <property type="term" value="F:DNA-binding transcription factor activity"/>
    <property type="evidence" value="ECO:0000314"/>
    <property type="project" value="UniProtKB"/>
</dbReference>
<dbReference type="GO" id="GO:0042803">
    <property type="term" value="F:protein homodimerization activity"/>
    <property type="evidence" value="ECO:0000314"/>
    <property type="project" value="UniProtKB"/>
</dbReference>
<dbReference type="GO" id="GO:0043565">
    <property type="term" value="F:sequence-specific DNA binding"/>
    <property type="evidence" value="ECO:0000314"/>
    <property type="project" value="UniProtKB"/>
</dbReference>
<dbReference type="GO" id="GO:0000976">
    <property type="term" value="F:transcription cis-regulatory region binding"/>
    <property type="evidence" value="ECO:0000314"/>
    <property type="project" value="UniProtKB"/>
</dbReference>
<dbReference type="GO" id="GO:0045893">
    <property type="term" value="P:positive regulation of DNA-templated transcription"/>
    <property type="evidence" value="ECO:0000314"/>
    <property type="project" value="UniProtKB"/>
</dbReference>
<dbReference type="GO" id="GO:0010628">
    <property type="term" value="P:positive regulation of gene expression"/>
    <property type="evidence" value="ECO:0000315"/>
    <property type="project" value="UniProtKB"/>
</dbReference>
<dbReference type="CDD" id="cd00038">
    <property type="entry name" value="CAP_ED"/>
    <property type="match status" value="1"/>
</dbReference>
<dbReference type="FunFam" id="2.60.120.10:FF:000003">
    <property type="entry name" value="Crp/Fnr family transcriptional regulator"/>
    <property type="match status" value="1"/>
</dbReference>
<dbReference type="FunFam" id="1.10.10.10:FF:001146">
    <property type="entry name" value="Cyclic AMP receptor protein"/>
    <property type="match status" value="1"/>
</dbReference>
<dbReference type="Gene3D" id="2.60.120.10">
    <property type="entry name" value="Jelly Rolls"/>
    <property type="match status" value="1"/>
</dbReference>
<dbReference type="Gene3D" id="1.10.10.10">
    <property type="entry name" value="Winged helix-like DNA-binding domain superfamily/Winged helix DNA-binding domain"/>
    <property type="match status" value="1"/>
</dbReference>
<dbReference type="InterPro" id="IPR018488">
    <property type="entry name" value="cNMP-bd_CS"/>
</dbReference>
<dbReference type="InterPro" id="IPR000595">
    <property type="entry name" value="cNMP-bd_dom"/>
</dbReference>
<dbReference type="InterPro" id="IPR018490">
    <property type="entry name" value="cNMP-bd_dom_sf"/>
</dbReference>
<dbReference type="InterPro" id="IPR050397">
    <property type="entry name" value="Env_Response_Regulators"/>
</dbReference>
<dbReference type="InterPro" id="IPR012318">
    <property type="entry name" value="HTH_CRP"/>
</dbReference>
<dbReference type="InterPro" id="IPR014710">
    <property type="entry name" value="RmlC-like_jellyroll"/>
</dbReference>
<dbReference type="InterPro" id="IPR036388">
    <property type="entry name" value="WH-like_DNA-bd_sf"/>
</dbReference>
<dbReference type="InterPro" id="IPR036390">
    <property type="entry name" value="WH_DNA-bd_sf"/>
</dbReference>
<dbReference type="PANTHER" id="PTHR24567">
    <property type="entry name" value="CRP FAMILY TRANSCRIPTIONAL REGULATORY PROTEIN"/>
    <property type="match status" value="1"/>
</dbReference>
<dbReference type="PANTHER" id="PTHR24567:SF74">
    <property type="entry name" value="HTH-TYPE TRANSCRIPTIONAL REGULATOR ARCR"/>
    <property type="match status" value="1"/>
</dbReference>
<dbReference type="Pfam" id="PF00027">
    <property type="entry name" value="cNMP_binding"/>
    <property type="match status" value="1"/>
</dbReference>
<dbReference type="Pfam" id="PF13545">
    <property type="entry name" value="HTH_Crp_2"/>
    <property type="match status" value="1"/>
</dbReference>
<dbReference type="PRINTS" id="PR00103">
    <property type="entry name" value="CAMPKINASE"/>
</dbReference>
<dbReference type="SMART" id="SM00100">
    <property type="entry name" value="cNMP"/>
    <property type="match status" value="1"/>
</dbReference>
<dbReference type="SMART" id="SM00419">
    <property type="entry name" value="HTH_CRP"/>
    <property type="match status" value="1"/>
</dbReference>
<dbReference type="SUPFAM" id="SSF51206">
    <property type="entry name" value="cAMP-binding domain-like"/>
    <property type="match status" value="1"/>
</dbReference>
<dbReference type="SUPFAM" id="SSF46785">
    <property type="entry name" value="Winged helix' DNA-binding domain"/>
    <property type="match status" value="1"/>
</dbReference>
<dbReference type="PROSITE" id="PS00889">
    <property type="entry name" value="CNMP_BINDING_2"/>
    <property type="match status" value="1"/>
</dbReference>
<dbReference type="PROSITE" id="PS50042">
    <property type="entry name" value="CNMP_BINDING_3"/>
    <property type="match status" value="1"/>
</dbReference>
<dbReference type="PROSITE" id="PS51063">
    <property type="entry name" value="HTH_CRP_2"/>
    <property type="match status" value="1"/>
</dbReference>
<evidence type="ECO:0000255" key="1">
    <source>
        <dbReference type="PROSITE-ProRule" id="PRU00060"/>
    </source>
</evidence>
<evidence type="ECO:0000255" key="2">
    <source>
        <dbReference type="PROSITE-ProRule" id="PRU00387"/>
    </source>
</evidence>
<evidence type="ECO:0000269" key="3">
    <source>
    </source>
</evidence>
<evidence type="ECO:0000269" key="4">
    <source ref="3"/>
</evidence>
<evidence type="ECO:0000303" key="5">
    <source>
    </source>
</evidence>
<evidence type="ECO:0000312" key="6">
    <source>
        <dbReference type="EMBL" id="BAD71260.1"/>
    </source>
</evidence>
<evidence type="ECO:0000312" key="7">
    <source>
        <dbReference type="PDB" id="4EV0"/>
    </source>
</evidence>
<evidence type="ECO:0000312" key="8">
    <source>
        <dbReference type="Proteomes" id="UP000000532"/>
    </source>
</evidence>
<evidence type="ECO:0007744" key="9">
    <source>
        <dbReference type="PDB" id="4EV0"/>
    </source>
</evidence>
<evidence type="ECO:0007829" key="10">
    <source>
        <dbReference type="PDB" id="4EV0"/>
    </source>
</evidence>
<feature type="chain" id="PRO_0000436193" description="Cyclic AMP receptor protein">
    <location>
        <begin position="1"/>
        <end position="216"/>
    </location>
</feature>
<feature type="domain" description="HTH crp-type" evidence="2">
    <location>
        <begin position="140"/>
        <end position="206"/>
    </location>
</feature>
<feature type="DNA-binding region" description="H-T-H motif" evidence="2">
    <location>
        <begin position="166"/>
        <end position="185"/>
    </location>
</feature>
<feature type="binding site" evidence="1">
    <location>
        <begin position="6"/>
        <end position="126"/>
    </location>
    <ligand>
        <name>a nucleoside 3',5'-cyclic phosphate</name>
        <dbReference type="ChEBI" id="CHEBI:58464"/>
    </ligand>
</feature>
<feature type="binding site" evidence="4 9">
    <location>
        <begin position="75"/>
        <end position="78"/>
    </location>
    <ligand>
        <name>3',5'-cyclic AMP</name>
        <dbReference type="ChEBI" id="CHEBI:58165"/>
    </ligand>
</feature>
<feature type="binding site" evidence="4 9">
    <location>
        <begin position="85"/>
        <end position="86"/>
    </location>
    <ligand>
        <name>3',5'-cyclic AMP</name>
        <dbReference type="ChEBI" id="CHEBI:58165"/>
    </ligand>
</feature>
<feature type="helix" evidence="10">
    <location>
        <begin position="5"/>
        <end position="7"/>
    </location>
</feature>
<feature type="helix" evidence="10">
    <location>
        <begin position="12"/>
        <end position="19"/>
    </location>
</feature>
<feature type="strand" evidence="10">
    <location>
        <begin position="23"/>
        <end position="27"/>
    </location>
</feature>
<feature type="strand" evidence="10">
    <location>
        <begin position="32"/>
        <end position="34"/>
    </location>
</feature>
<feature type="strand" evidence="10">
    <location>
        <begin position="42"/>
        <end position="49"/>
    </location>
</feature>
<feature type="strand" evidence="10">
    <location>
        <begin position="51"/>
        <end position="56"/>
    </location>
</feature>
<feature type="strand" evidence="10">
    <location>
        <begin position="58"/>
        <end position="60"/>
    </location>
</feature>
<feature type="strand" evidence="10">
    <location>
        <begin position="62"/>
        <end position="68"/>
    </location>
</feature>
<feature type="helix" evidence="10">
    <location>
        <begin position="76"/>
        <end position="81"/>
    </location>
</feature>
<feature type="strand" evidence="10">
    <location>
        <begin position="86"/>
        <end position="101"/>
    </location>
</feature>
<feature type="helix" evidence="10">
    <location>
        <begin position="102"/>
        <end position="111"/>
    </location>
</feature>
<feature type="helix" evidence="10">
    <location>
        <begin position="113"/>
        <end position="155"/>
    </location>
</feature>
<feature type="strand" evidence="10">
    <location>
        <begin position="160"/>
        <end position="163"/>
    </location>
</feature>
<feature type="helix" evidence="10">
    <location>
        <begin position="166"/>
        <end position="173"/>
    </location>
</feature>
<feature type="helix" evidence="10">
    <location>
        <begin position="177"/>
        <end position="189"/>
    </location>
</feature>
<feature type="strand" evidence="10">
    <location>
        <begin position="192"/>
        <end position="196"/>
    </location>
</feature>
<feature type="strand" evidence="10">
    <location>
        <begin position="199"/>
        <end position="203"/>
    </location>
</feature>
<feature type="helix" evidence="10">
    <location>
        <begin position="205"/>
        <end position="212"/>
    </location>
</feature>
<keyword id="KW-0002">3D-structure</keyword>
<keyword id="KW-0114">cAMP</keyword>
<keyword id="KW-0903">Direct protein sequencing</keyword>
<keyword id="KW-0238">DNA-binding</keyword>
<keyword id="KW-0547">Nucleotide-binding</keyword>
<keyword id="KW-1185">Reference proteome</keyword>
<keyword id="KW-0804">Transcription</keyword>
<keyword id="KW-0805">Transcription regulation</keyword>